<dbReference type="EMBL" id="M31659">
    <property type="protein sequence ID" value="AAA36329.1"/>
    <property type="status" value="ALT_FRAME"/>
    <property type="molecule type" value="mRNA"/>
</dbReference>
<dbReference type="EMBL" id="AK290255">
    <property type="protein sequence ID" value="BAF82944.1"/>
    <property type="molecule type" value="mRNA"/>
</dbReference>
<dbReference type="EMBL" id="AL713888">
    <property type="status" value="NOT_ANNOTATED_CDS"/>
    <property type="molecule type" value="Genomic_DNA"/>
</dbReference>
<dbReference type="EMBL" id="CH471083">
    <property type="protein sequence ID" value="EAW54298.1"/>
    <property type="molecule type" value="Genomic_DNA"/>
</dbReference>
<dbReference type="EMBL" id="BC030266">
    <property type="protein sequence ID" value="AAH30266.1"/>
    <property type="molecule type" value="mRNA"/>
</dbReference>
<dbReference type="CCDS" id="CCDS7280.1"/>
<dbReference type="PIR" id="A40141">
    <property type="entry name" value="A40141"/>
</dbReference>
<dbReference type="RefSeq" id="NP_689920.1">
    <property type="nucleotide sequence ID" value="NM_152707.4"/>
</dbReference>
<dbReference type="RefSeq" id="XP_011538513.1">
    <property type="nucleotide sequence ID" value="XM_011540211.2"/>
</dbReference>
<dbReference type="SMR" id="P16260"/>
<dbReference type="BioGRID" id="113727">
    <property type="interactions" value="38"/>
</dbReference>
<dbReference type="FunCoup" id="P16260">
    <property type="interactions" value="1157"/>
</dbReference>
<dbReference type="IntAct" id="P16260">
    <property type="interactions" value="26"/>
</dbReference>
<dbReference type="STRING" id="9606.ENSP00000476815"/>
<dbReference type="TCDB" id="2.A.29.12.3">
    <property type="family name" value="the mitochondrial carrier (mc) family"/>
</dbReference>
<dbReference type="GlyCosmos" id="P16260">
    <property type="glycosylation" value="3 sites, 1 glycan"/>
</dbReference>
<dbReference type="GlyGen" id="P16260">
    <property type="glycosylation" value="3 sites, 1 O-linked glycan (3 sites)"/>
</dbReference>
<dbReference type="iPTMnet" id="P16260"/>
<dbReference type="PhosphoSitePlus" id="P16260"/>
<dbReference type="SwissPalm" id="P16260"/>
<dbReference type="BioMuta" id="SLC25A16"/>
<dbReference type="DMDM" id="215274156"/>
<dbReference type="jPOST" id="P16260"/>
<dbReference type="MassIVE" id="P16260"/>
<dbReference type="PaxDb" id="9606-ENSP00000476815"/>
<dbReference type="PeptideAtlas" id="P16260"/>
<dbReference type="ProteomicsDB" id="53331"/>
<dbReference type="Pumba" id="P16260"/>
<dbReference type="Antibodypedia" id="28525">
    <property type="antibodies" value="74 antibodies from 17 providers"/>
</dbReference>
<dbReference type="DNASU" id="8034"/>
<dbReference type="Ensembl" id="ENST00000609923.6">
    <property type="protein sequence ID" value="ENSP00000476815.1"/>
    <property type="gene ID" value="ENSG00000122912.15"/>
</dbReference>
<dbReference type="GeneID" id="8034"/>
<dbReference type="KEGG" id="hsa:8034"/>
<dbReference type="MANE-Select" id="ENST00000609923.6">
    <property type="protein sequence ID" value="ENSP00000476815.1"/>
    <property type="RefSeq nucleotide sequence ID" value="NM_152707.4"/>
    <property type="RefSeq protein sequence ID" value="NP_689920.1"/>
</dbReference>
<dbReference type="UCSC" id="uc001joi.4">
    <property type="organism name" value="human"/>
</dbReference>
<dbReference type="AGR" id="HGNC:10986"/>
<dbReference type="CTD" id="8034"/>
<dbReference type="DisGeNET" id="8034"/>
<dbReference type="GeneCards" id="SLC25A16"/>
<dbReference type="HGNC" id="HGNC:10986">
    <property type="gene designation" value="SLC25A16"/>
</dbReference>
<dbReference type="HPA" id="ENSG00000122912">
    <property type="expression patterns" value="Low tissue specificity"/>
</dbReference>
<dbReference type="MalaCards" id="SLC25A16"/>
<dbReference type="MIM" id="139080">
    <property type="type" value="gene"/>
</dbReference>
<dbReference type="neXtProt" id="NX_P16260"/>
<dbReference type="OpenTargets" id="ENSG00000122912"/>
<dbReference type="PharmGKB" id="PA35862"/>
<dbReference type="VEuPathDB" id="HostDB:ENSG00000122912"/>
<dbReference type="eggNOG" id="KOG0752">
    <property type="taxonomic scope" value="Eukaryota"/>
</dbReference>
<dbReference type="GeneTree" id="ENSGT00940000157520"/>
<dbReference type="HOGENOM" id="CLU_015166_10_1_1"/>
<dbReference type="InParanoid" id="P16260"/>
<dbReference type="OMA" id="YKMSVPK"/>
<dbReference type="OrthoDB" id="270584at2759"/>
<dbReference type="PAN-GO" id="P16260">
    <property type="GO annotations" value="0 GO annotations based on evolutionary models"/>
</dbReference>
<dbReference type="PhylomeDB" id="P16260"/>
<dbReference type="TreeFam" id="TF314806"/>
<dbReference type="PathwayCommons" id="P16260"/>
<dbReference type="Reactome" id="R-HSA-199220">
    <property type="pathway name" value="Vitamin B5 (pantothenate) metabolism"/>
</dbReference>
<dbReference type="SignaLink" id="P16260"/>
<dbReference type="BioGRID-ORCS" id="8034">
    <property type="hits" value="13 hits in 1162 CRISPR screens"/>
</dbReference>
<dbReference type="ChiTaRS" id="SLC25A16">
    <property type="organism name" value="human"/>
</dbReference>
<dbReference type="GenomeRNAi" id="8034"/>
<dbReference type="Pharos" id="P16260">
    <property type="development level" value="Tbio"/>
</dbReference>
<dbReference type="PRO" id="PR:P16260"/>
<dbReference type="Proteomes" id="UP000005640">
    <property type="component" value="Chromosome 10"/>
</dbReference>
<dbReference type="RNAct" id="P16260">
    <property type="molecule type" value="protein"/>
</dbReference>
<dbReference type="Bgee" id="ENSG00000122912">
    <property type="expression patterns" value="Expressed in jejunal mucosa and 184 other cell types or tissues"/>
</dbReference>
<dbReference type="ExpressionAtlas" id="P16260">
    <property type="expression patterns" value="baseline and differential"/>
</dbReference>
<dbReference type="GO" id="GO:0005743">
    <property type="term" value="C:mitochondrial inner membrane"/>
    <property type="evidence" value="ECO:0000318"/>
    <property type="project" value="GO_Central"/>
</dbReference>
<dbReference type="GO" id="GO:0005739">
    <property type="term" value="C:mitochondrion"/>
    <property type="evidence" value="ECO:0000314"/>
    <property type="project" value="HPA"/>
</dbReference>
<dbReference type="GO" id="GO:0015297">
    <property type="term" value="F:antiporter activity"/>
    <property type="evidence" value="ECO:0000303"/>
    <property type="project" value="UniProtKB"/>
</dbReference>
<dbReference type="GO" id="GO:0015228">
    <property type="term" value="F:coenzyme A transmembrane transporter activity"/>
    <property type="evidence" value="ECO:0000318"/>
    <property type="project" value="GO_Central"/>
</dbReference>
<dbReference type="GO" id="GO:1990559">
    <property type="term" value="P:mitochondrial coenzyme A transmembrane transport"/>
    <property type="evidence" value="ECO:0000318"/>
    <property type="project" value="GO_Central"/>
</dbReference>
<dbReference type="GO" id="GO:0006839">
    <property type="term" value="P:mitochondrial transport"/>
    <property type="evidence" value="ECO:0000303"/>
    <property type="project" value="UniProtKB"/>
</dbReference>
<dbReference type="GO" id="GO:0015939">
    <property type="term" value="P:pantothenate metabolic process"/>
    <property type="evidence" value="ECO:0000304"/>
    <property type="project" value="Reactome"/>
</dbReference>
<dbReference type="FunFam" id="1.50.40.10:FF:000052">
    <property type="entry name" value="Solute carrier family 25 member 16"/>
    <property type="match status" value="1"/>
</dbReference>
<dbReference type="Gene3D" id="1.50.40.10">
    <property type="entry name" value="Mitochondrial carrier domain"/>
    <property type="match status" value="1"/>
</dbReference>
<dbReference type="InterPro" id="IPR002167">
    <property type="entry name" value="GDC-like"/>
</dbReference>
<dbReference type="InterPro" id="IPR002067">
    <property type="entry name" value="Mit_carrier"/>
</dbReference>
<dbReference type="InterPro" id="IPR018108">
    <property type="entry name" value="Mitochondrial_sb/sol_carrier"/>
</dbReference>
<dbReference type="InterPro" id="IPR023395">
    <property type="entry name" value="Mt_carrier_dom_sf"/>
</dbReference>
<dbReference type="PANTHER" id="PTHR24089">
    <property type="entry name" value="SOLUTE CARRIER FAMILY 25"/>
    <property type="match status" value="1"/>
</dbReference>
<dbReference type="Pfam" id="PF00153">
    <property type="entry name" value="Mito_carr"/>
    <property type="match status" value="3"/>
</dbReference>
<dbReference type="PRINTS" id="PR00928">
    <property type="entry name" value="GRAVESDC"/>
</dbReference>
<dbReference type="PRINTS" id="PR00926">
    <property type="entry name" value="MITOCARRIER"/>
</dbReference>
<dbReference type="SUPFAM" id="SSF103506">
    <property type="entry name" value="Mitochondrial carrier"/>
    <property type="match status" value="1"/>
</dbReference>
<dbReference type="PROSITE" id="PS50920">
    <property type="entry name" value="SOLCAR"/>
    <property type="match status" value="3"/>
</dbReference>
<protein>
    <recommendedName>
        <fullName>Solute carrier family 25 member 16</fullName>
    </recommendedName>
    <alternativeName>
        <fullName>Graves disease autoantigen</fullName>
        <shortName>GDA</shortName>
    </alternativeName>
    <alternativeName>
        <fullName evidence="1">Graves disease carrier protein</fullName>
        <shortName evidence="1">GDC</shortName>
    </alternativeName>
    <alternativeName>
        <fullName evidence="5">Graves' didease protein</fullName>
        <shortName evidence="4">hGP</shortName>
    </alternativeName>
    <alternativeName>
        <fullName>Mitochondrial solute carrier protein homolog</fullName>
    </alternativeName>
</protein>
<comment type="function">
    <text evidence="3">May be involved in the transport of coenzyme A in the mitochondrial matrix (PubMed:11158296). Very little is known about the physiological function of this carrier (PubMed:11158296).</text>
</comment>
<comment type="subcellular location">
    <subcellularLocation>
        <location evidence="7">Mitochondrion inner membrane</location>
        <topology evidence="2">Multi-pass membrane protein</topology>
    </subcellularLocation>
</comment>
<comment type="similarity">
    <text evidence="6">Belongs to the mitochondrial carrier (TC 2.A.29) family.</text>
</comment>
<comment type="sequence caution" evidence="6">
    <conflict type="frameshift">
        <sequence resource="EMBL-CDS" id="AAA36329"/>
    </conflict>
</comment>
<sequence length="332" mass="36224">MAAATAAAALAAADPPPAMPQAAGAGGPTTRRDFYWLRSFLAGGIAGCCAKTTVAPLDRVKVLLQAHNHHYKHLGVFSALRAVPQKEGFLGLYKGNGAMMIRIFPYGAIQFMAFEHYKTLITTKLGISGHVHRLMAGSMAGMTAVICTYPLDMVRVRLAFQVKGEHSYTGIIHAFKTIYAKEGGFFGFYRGLMPTILGMAPYAGVSFFTFGTLKSVGLSHAPTLLGRPSSDNPNVLVLKTHVNLLCGGVAGAIAQTISYPFDVTRRRMQLGTVLPEFEKCLTMRDTMKYVYGHHGIRKGLYRGLSLNYIRCIPSQAVAFTTYELMKQFFHLN</sequence>
<name>GDC_HUMAN</name>
<reference key="1">
    <citation type="journal article" date="1989" name="Mol. Endocrinol.">
        <title>Sequence and chromosomal assignment of a novel cDNA identified by immunoscreening of a thyroid expression library: similarity to a family of mitochondrial solute carrier proteins.</title>
        <authorList>
            <person name="Zarrilli R."/>
            <person name="Oates E.L."/>
            <person name="McBride O.W."/>
            <person name="Lerman M.I."/>
            <person name="Chan J.Y."/>
            <person name="Santisteban P."/>
            <person name="Ursini M.V."/>
            <person name="Notkins A.L."/>
            <person name="Kohn L.D."/>
        </authorList>
    </citation>
    <scope>NUCLEOTIDE SEQUENCE [MRNA]</scope>
    <source>
        <tissue>Thyroid</tissue>
    </source>
</reference>
<reference key="2">
    <citation type="journal article" date="1992" name="DNA Seq.">
        <title>Sequence and pattern of expression of a bovine homologue of a human mitochondrial transport protein associated with Grave's disease.</title>
        <authorList>
            <person name="Fiermonte G."/>
            <person name="Runswick M.J."/>
            <person name="Walker J.E."/>
            <person name="Palmieri F."/>
        </authorList>
    </citation>
    <scope>SEQUENCE REVISION TO C-TERMINUS</scope>
</reference>
<reference key="3">
    <citation type="journal article" date="2004" name="Nat. Genet.">
        <title>Complete sequencing and characterization of 21,243 full-length human cDNAs.</title>
        <authorList>
            <person name="Ota T."/>
            <person name="Suzuki Y."/>
            <person name="Nishikawa T."/>
            <person name="Otsuki T."/>
            <person name="Sugiyama T."/>
            <person name="Irie R."/>
            <person name="Wakamatsu A."/>
            <person name="Hayashi K."/>
            <person name="Sato H."/>
            <person name="Nagai K."/>
            <person name="Kimura K."/>
            <person name="Makita H."/>
            <person name="Sekine M."/>
            <person name="Obayashi M."/>
            <person name="Nishi T."/>
            <person name="Shibahara T."/>
            <person name="Tanaka T."/>
            <person name="Ishii S."/>
            <person name="Yamamoto J."/>
            <person name="Saito K."/>
            <person name="Kawai Y."/>
            <person name="Isono Y."/>
            <person name="Nakamura Y."/>
            <person name="Nagahari K."/>
            <person name="Murakami K."/>
            <person name="Yasuda T."/>
            <person name="Iwayanagi T."/>
            <person name="Wagatsuma M."/>
            <person name="Shiratori A."/>
            <person name="Sudo H."/>
            <person name="Hosoiri T."/>
            <person name="Kaku Y."/>
            <person name="Kodaira H."/>
            <person name="Kondo H."/>
            <person name="Sugawara M."/>
            <person name="Takahashi M."/>
            <person name="Kanda K."/>
            <person name="Yokoi T."/>
            <person name="Furuya T."/>
            <person name="Kikkawa E."/>
            <person name="Omura Y."/>
            <person name="Abe K."/>
            <person name="Kamihara K."/>
            <person name="Katsuta N."/>
            <person name="Sato K."/>
            <person name="Tanikawa M."/>
            <person name="Yamazaki M."/>
            <person name="Ninomiya K."/>
            <person name="Ishibashi T."/>
            <person name="Yamashita H."/>
            <person name="Murakawa K."/>
            <person name="Fujimori K."/>
            <person name="Tanai H."/>
            <person name="Kimata M."/>
            <person name="Watanabe M."/>
            <person name="Hiraoka S."/>
            <person name="Chiba Y."/>
            <person name="Ishida S."/>
            <person name="Ono Y."/>
            <person name="Takiguchi S."/>
            <person name="Watanabe S."/>
            <person name="Yosida M."/>
            <person name="Hotuta T."/>
            <person name="Kusano J."/>
            <person name="Kanehori K."/>
            <person name="Takahashi-Fujii A."/>
            <person name="Hara H."/>
            <person name="Tanase T.-O."/>
            <person name="Nomura Y."/>
            <person name="Togiya S."/>
            <person name="Komai F."/>
            <person name="Hara R."/>
            <person name="Takeuchi K."/>
            <person name="Arita M."/>
            <person name="Imose N."/>
            <person name="Musashino K."/>
            <person name="Yuuki H."/>
            <person name="Oshima A."/>
            <person name="Sasaki N."/>
            <person name="Aotsuka S."/>
            <person name="Yoshikawa Y."/>
            <person name="Matsunawa H."/>
            <person name="Ichihara T."/>
            <person name="Shiohata N."/>
            <person name="Sano S."/>
            <person name="Moriya S."/>
            <person name="Momiyama H."/>
            <person name="Satoh N."/>
            <person name="Takami S."/>
            <person name="Terashima Y."/>
            <person name="Suzuki O."/>
            <person name="Nakagawa S."/>
            <person name="Senoh A."/>
            <person name="Mizoguchi H."/>
            <person name="Goto Y."/>
            <person name="Shimizu F."/>
            <person name="Wakebe H."/>
            <person name="Hishigaki H."/>
            <person name="Watanabe T."/>
            <person name="Sugiyama A."/>
            <person name="Takemoto M."/>
            <person name="Kawakami B."/>
            <person name="Yamazaki M."/>
            <person name="Watanabe K."/>
            <person name="Kumagai A."/>
            <person name="Itakura S."/>
            <person name="Fukuzumi Y."/>
            <person name="Fujimori Y."/>
            <person name="Komiyama M."/>
            <person name="Tashiro H."/>
            <person name="Tanigami A."/>
            <person name="Fujiwara T."/>
            <person name="Ono T."/>
            <person name="Yamada K."/>
            <person name="Fujii Y."/>
            <person name="Ozaki K."/>
            <person name="Hirao M."/>
            <person name="Ohmori Y."/>
            <person name="Kawabata A."/>
            <person name="Hikiji T."/>
            <person name="Kobatake N."/>
            <person name="Inagaki H."/>
            <person name="Ikema Y."/>
            <person name="Okamoto S."/>
            <person name="Okitani R."/>
            <person name="Kawakami T."/>
            <person name="Noguchi S."/>
            <person name="Itoh T."/>
            <person name="Shigeta K."/>
            <person name="Senba T."/>
            <person name="Matsumura K."/>
            <person name="Nakajima Y."/>
            <person name="Mizuno T."/>
            <person name="Morinaga M."/>
            <person name="Sasaki M."/>
            <person name="Togashi T."/>
            <person name="Oyama M."/>
            <person name="Hata H."/>
            <person name="Watanabe M."/>
            <person name="Komatsu T."/>
            <person name="Mizushima-Sugano J."/>
            <person name="Satoh T."/>
            <person name="Shirai Y."/>
            <person name="Takahashi Y."/>
            <person name="Nakagawa K."/>
            <person name="Okumura K."/>
            <person name="Nagase T."/>
            <person name="Nomura N."/>
            <person name="Kikuchi H."/>
            <person name="Masuho Y."/>
            <person name="Yamashita R."/>
            <person name="Nakai K."/>
            <person name="Yada T."/>
            <person name="Nakamura Y."/>
            <person name="Ohara O."/>
            <person name="Isogai T."/>
            <person name="Sugano S."/>
        </authorList>
    </citation>
    <scope>NUCLEOTIDE SEQUENCE [LARGE SCALE MRNA]</scope>
    <source>
        <tissue>Colon</tissue>
    </source>
</reference>
<reference key="4">
    <citation type="journal article" date="2004" name="Nature">
        <title>The DNA sequence and comparative analysis of human chromosome 10.</title>
        <authorList>
            <person name="Deloukas P."/>
            <person name="Earthrowl M.E."/>
            <person name="Grafham D.V."/>
            <person name="Rubenfield M."/>
            <person name="French L."/>
            <person name="Steward C.A."/>
            <person name="Sims S.K."/>
            <person name="Jones M.C."/>
            <person name="Searle S."/>
            <person name="Scott C."/>
            <person name="Howe K."/>
            <person name="Hunt S.E."/>
            <person name="Andrews T.D."/>
            <person name="Gilbert J.G.R."/>
            <person name="Swarbreck D."/>
            <person name="Ashurst J.L."/>
            <person name="Taylor A."/>
            <person name="Battles J."/>
            <person name="Bird C.P."/>
            <person name="Ainscough R."/>
            <person name="Almeida J.P."/>
            <person name="Ashwell R.I.S."/>
            <person name="Ambrose K.D."/>
            <person name="Babbage A.K."/>
            <person name="Bagguley C.L."/>
            <person name="Bailey J."/>
            <person name="Banerjee R."/>
            <person name="Bates K."/>
            <person name="Beasley H."/>
            <person name="Bray-Allen S."/>
            <person name="Brown A.J."/>
            <person name="Brown J.Y."/>
            <person name="Burford D.C."/>
            <person name="Burrill W."/>
            <person name="Burton J."/>
            <person name="Cahill P."/>
            <person name="Camire D."/>
            <person name="Carter N.P."/>
            <person name="Chapman J.C."/>
            <person name="Clark S.Y."/>
            <person name="Clarke G."/>
            <person name="Clee C.M."/>
            <person name="Clegg S."/>
            <person name="Corby N."/>
            <person name="Coulson A."/>
            <person name="Dhami P."/>
            <person name="Dutta I."/>
            <person name="Dunn M."/>
            <person name="Faulkner L."/>
            <person name="Frankish A."/>
            <person name="Frankland J.A."/>
            <person name="Garner P."/>
            <person name="Garnett J."/>
            <person name="Gribble S."/>
            <person name="Griffiths C."/>
            <person name="Grocock R."/>
            <person name="Gustafson E."/>
            <person name="Hammond S."/>
            <person name="Harley J.L."/>
            <person name="Hart E."/>
            <person name="Heath P.D."/>
            <person name="Ho T.P."/>
            <person name="Hopkins B."/>
            <person name="Horne J."/>
            <person name="Howden P.J."/>
            <person name="Huckle E."/>
            <person name="Hynds C."/>
            <person name="Johnson C."/>
            <person name="Johnson D."/>
            <person name="Kana A."/>
            <person name="Kay M."/>
            <person name="Kimberley A.M."/>
            <person name="Kershaw J.K."/>
            <person name="Kokkinaki M."/>
            <person name="Laird G.K."/>
            <person name="Lawlor S."/>
            <person name="Lee H.M."/>
            <person name="Leongamornlert D.A."/>
            <person name="Laird G."/>
            <person name="Lloyd C."/>
            <person name="Lloyd D.M."/>
            <person name="Loveland J."/>
            <person name="Lovell J."/>
            <person name="McLaren S."/>
            <person name="McLay K.E."/>
            <person name="McMurray A."/>
            <person name="Mashreghi-Mohammadi M."/>
            <person name="Matthews L."/>
            <person name="Milne S."/>
            <person name="Nickerson T."/>
            <person name="Nguyen M."/>
            <person name="Overton-Larty E."/>
            <person name="Palmer S.A."/>
            <person name="Pearce A.V."/>
            <person name="Peck A.I."/>
            <person name="Pelan S."/>
            <person name="Phillimore B."/>
            <person name="Porter K."/>
            <person name="Rice C.M."/>
            <person name="Rogosin A."/>
            <person name="Ross M.T."/>
            <person name="Sarafidou T."/>
            <person name="Sehra H.K."/>
            <person name="Shownkeen R."/>
            <person name="Skuce C.D."/>
            <person name="Smith M."/>
            <person name="Standring L."/>
            <person name="Sycamore N."/>
            <person name="Tester J."/>
            <person name="Thorpe A."/>
            <person name="Torcasso W."/>
            <person name="Tracey A."/>
            <person name="Tromans A."/>
            <person name="Tsolas J."/>
            <person name="Wall M."/>
            <person name="Walsh J."/>
            <person name="Wang H."/>
            <person name="Weinstock K."/>
            <person name="West A.P."/>
            <person name="Willey D.L."/>
            <person name="Whitehead S.L."/>
            <person name="Wilming L."/>
            <person name="Wray P.W."/>
            <person name="Young L."/>
            <person name="Chen Y."/>
            <person name="Lovering R.C."/>
            <person name="Moschonas N.K."/>
            <person name="Siebert R."/>
            <person name="Fechtel K."/>
            <person name="Bentley D."/>
            <person name="Durbin R.M."/>
            <person name="Hubbard T."/>
            <person name="Doucette-Stamm L."/>
            <person name="Beck S."/>
            <person name="Smith D.R."/>
            <person name="Rogers J."/>
        </authorList>
    </citation>
    <scope>NUCLEOTIDE SEQUENCE [LARGE SCALE GENOMIC DNA]</scope>
</reference>
<reference key="5">
    <citation type="submission" date="2005-07" db="EMBL/GenBank/DDBJ databases">
        <authorList>
            <person name="Mural R.J."/>
            <person name="Istrail S."/>
            <person name="Sutton G.G."/>
            <person name="Florea L."/>
            <person name="Halpern A.L."/>
            <person name="Mobarry C.M."/>
            <person name="Lippert R."/>
            <person name="Walenz B."/>
            <person name="Shatkay H."/>
            <person name="Dew I."/>
            <person name="Miller J.R."/>
            <person name="Flanigan M.J."/>
            <person name="Edwards N.J."/>
            <person name="Bolanos R."/>
            <person name="Fasulo D."/>
            <person name="Halldorsson B.V."/>
            <person name="Hannenhalli S."/>
            <person name="Turner R."/>
            <person name="Yooseph S."/>
            <person name="Lu F."/>
            <person name="Nusskern D.R."/>
            <person name="Shue B.C."/>
            <person name="Zheng X.H."/>
            <person name="Zhong F."/>
            <person name="Delcher A.L."/>
            <person name="Huson D.H."/>
            <person name="Kravitz S.A."/>
            <person name="Mouchard L."/>
            <person name="Reinert K."/>
            <person name="Remington K.A."/>
            <person name="Clark A.G."/>
            <person name="Waterman M.S."/>
            <person name="Eichler E.E."/>
            <person name="Adams M.D."/>
            <person name="Hunkapiller M.W."/>
            <person name="Myers E.W."/>
            <person name="Venter J.C."/>
        </authorList>
    </citation>
    <scope>NUCLEOTIDE SEQUENCE [LARGE SCALE GENOMIC DNA]</scope>
</reference>
<reference key="6">
    <citation type="journal article" date="2004" name="Genome Res.">
        <title>The status, quality, and expansion of the NIH full-length cDNA project: the Mammalian Gene Collection (MGC).</title>
        <authorList>
            <consortium name="The MGC Project Team"/>
        </authorList>
    </citation>
    <scope>NUCLEOTIDE SEQUENCE [LARGE SCALE MRNA]</scope>
    <source>
        <tissue>Brain</tissue>
    </source>
</reference>
<reference key="7">
    <citation type="journal article" date="2001" name="Mol. Cell. Biol.">
        <title>The yeast mitochondrial carrier Leu5p and its human homologue Graves' disease protein are required for accumulation of coenzyme A in the matrix.</title>
        <authorList>
            <person name="Prohl C."/>
            <person name="Pelzer W."/>
            <person name="Diekert K."/>
            <person name="Kmita H."/>
            <person name="Bedekovics T."/>
            <person name="Kispal G."/>
            <person name="Lill R."/>
        </authorList>
    </citation>
    <scope>FUNCTION</scope>
    <scope>SUBCELLULAR LOCATION</scope>
</reference>
<reference key="8">
    <citation type="journal article" date="2008" name="Proc. Natl. Acad. Sci. U.S.A.">
        <title>A quantitative atlas of mitotic phosphorylation.</title>
        <authorList>
            <person name="Dephoure N."/>
            <person name="Zhou C."/>
            <person name="Villen J."/>
            <person name="Beausoleil S.A."/>
            <person name="Bakalarski C.E."/>
            <person name="Elledge S.J."/>
            <person name="Gygi S.P."/>
        </authorList>
    </citation>
    <scope>IDENTIFICATION BY MASS SPECTROMETRY [LARGE SCALE ANALYSIS]</scope>
    <source>
        <tissue>Cervix carcinoma</tissue>
    </source>
</reference>
<evidence type="ECO:0000250" key="1">
    <source>
        <dbReference type="UniProtKB" id="Q01888"/>
    </source>
</evidence>
<evidence type="ECO:0000255" key="2"/>
<evidence type="ECO:0000269" key="3">
    <source>
    </source>
</evidence>
<evidence type="ECO:0000303" key="4">
    <source>
    </source>
</evidence>
<evidence type="ECO:0000303" key="5">
    <source>
    </source>
</evidence>
<evidence type="ECO:0000305" key="6"/>
<evidence type="ECO:0000305" key="7">
    <source>
    </source>
</evidence>
<evidence type="ECO:0000312" key="8">
    <source>
        <dbReference type="HGNC" id="HGNC:10986"/>
    </source>
</evidence>
<organism>
    <name type="scientific">Homo sapiens</name>
    <name type="common">Human</name>
    <dbReference type="NCBI Taxonomy" id="9606"/>
    <lineage>
        <taxon>Eukaryota</taxon>
        <taxon>Metazoa</taxon>
        <taxon>Chordata</taxon>
        <taxon>Craniata</taxon>
        <taxon>Vertebrata</taxon>
        <taxon>Euteleostomi</taxon>
        <taxon>Mammalia</taxon>
        <taxon>Eutheria</taxon>
        <taxon>Euarchontoglires</taxon>
        <taxon>Primates</taxon>
        <taxon>Haplorrhini</taxon>
        <taxon>Catarrhini</taxon>
        <taxon>Hominidae</taxon>
        <taxon>Homo</taxon>
    </lineage>
</organism>
<gene>
    <name evidence="8" type="primary">SLC25A16</name>
    <name type="synonym">GDA</name>
</gene>
<accession>P16260</accession>
<accession>Q8N2U1</accession>
<feature type="chain" id="PRO_0000090616" description="Solute carrier family 25 member 16">
    <location>
        <begin position="1"/>
        <end position="332"/>
    </location>
</feature>
<feature type="transmembrane region" description="Helical; Name=1" evidence="2">
    <location>
        <begin position="37"/>
        <end position="57"/>
    </location>
</feature>
<feature type="transmembrane region" description="Helical; Name=2" evidence="2">
    <location>
        <begin position="88"/>
        <end position="108"/>
    </location>
</feature>
<feature type="transmembrane region" description="Helical; Name=3" evidence="2">
    <location>
        <begin position="134"/>
        <end position="154"/>
    </location>
</feature>
<feature type="transmembrane region" description="Helical; Name=4" evidence="2">
    <location>
        <begin position="191"/>
        <end position="211"/>
    </location>
</feature>
<feature type="transmembrane region" description="Helical; Name=5" evidence="2">
    <location>
        <begin position="244"/>
        <end position="264"/>
    </location>
</feature>
<feature type="transmembrane region" description="Helical; Name=6" evidence="2">
    <location>
        <begin position="299"/>
        <end position="319"/>
    </location>
</feature>
<feature type="repeat" description="Solcar 1">
    <location>
        <begin position="34"/>
        <end position="120"/>
    </location>
</feature>
<feature type="repeat" description="Solcar 2">
    <location>
        <begin position="128"/>
        <end position="216"/>
    </location>
</feature>
<feature type="repeat" description="Solcar 3">
    <location>
        <begin position="238"/>
        <end position="328"/>
    </location>
</feature>
<feature type="sequence conflict" description="In Ref. 1; AAA36329." evidence="6" ref="1">
    <original>Q</original>
    <variation>G</variation>
    <location>
        <position position="21"/>
    </location>
</feature>
<feature type="sequence conflict" description="In Ref. 1; AAA36329." evidence="6" ref="1">
    <original>G</original>
    <variation>S</variation>
    <location>
        <position position="44"/>
    </location>
</feature>
<feature type="sequence conflict" description="In Ref. 1; AAA36329." evidence="6" ref="1">
    <original>YPL</original>
    <variation>DPV</variation>
    <location>
        <begin position="149"/>
        <end position="151"/>
    </location>
</feature>
<feature type="sequence conflict" description="In Ref. 1; AAA36329." evidence="6" ref="1">
    <original>S</original>
    <variation>R</variation>
    <location>
        <position position="167"/>
    </location>
</feature>
<feature type="sequence conflict" description="In Ref. 1; AAA36329." evidence="6" ref="1">
    <original>R</original>
    <variation>S</variation>
    <location>
        <position position="227"/>
    </location>
</feature>
<feature type="sequence conflict" description="In Ref. 1; AAA36329." evidence="6" ref="1">
    <original>G</original>
    <variation>R</variation>
    <location>
        <position position="251"/>
    </location>
</feature>
<feature type="sequence conflict" description="In Ref. 1; AAA36329." evidence="6" ref="1">
    <original>V</original>
    <variation>D</variation>
    <location>
        <position position="290"/>
    </location>
</feature>
<proteinExistence type="evidence at protein level"/>
<keyword id="KW-0472">Membrane</keyword>
<keyword id="KW-0496">Mitochondrion</keyword>
<keyword id="KW-0999">Mitochondrion inner membrane</keyword>
<keyword id="KW-1267">Proteomics identification</keyword>
<keyword id="KW-1185">Reference proteome</keyword>
<keyword id="KW-0677">Repeat</keyword>
<keyword id="KW-0812">Transmembrane</keyword>
<keyword id="KW-1133">Transmembrane helix</keyword>
<keyword id="KW-0813">Transport</keyword>